<reference key="1">
    <citation type="journal article" date="1998" name="Genome Res.">
        <title>Snapshot of a large dynamic replicon in a halophilic archaeon: megaplasmid or minichromosome?</title>
        <authorList>
            <person name="Ng W.V."/>
            <person name="Ciufo S.A."/>
            <person name="Smith T.M."/>
            <person name="Bumgarner R.E."/>
            <person name="Baskin D."/>
            <person name="Faust J."/>
            <person name="Hall B."/>
            <person name="Loretz C."/>
            <person name="Seto J."/>
            <person name="Slagel J."/>
            <person name="Hood L."/>
            <person name="DasSarma S."/>
        </authorList>
    </citation>
    <scope>NUCLEOTIDE SEQUENCE [LARGE SCALE GENOMIC DNA]</scope>
    <source>
        <strain>ATCC 700922 / JCM 11081 / NRC-1</strain>
    </source>
</reference>
<reference key="2">
    <citation type="journal article" date="2000" name="Proc. Natl. Acad. Sci. U.S.A.">
        <title>Genome sequence of Halobacterium species NRC-1.</title>
        <authorList>
            <person name="Ng W.V."/>
            <person name="Kennedy S.P."/>
            <person name="Mahairas G.G."/>
            <person name="Berquist B."/>
            <person name="Pan M."/>
            <person name="Shukla H.D."/>
            <person name="Lasky S.R."/>
            <person name="Baliga N.S."/>
            <person name="Thorsson V."/>
            <person name="Sbrogna J."/>
            <person name="Swartzell S."/>
            <person name="Weir D."/>
            <person name="Hall J."/>
            <person name="Dahl T.A."/>
            <person name="Welti R."/>
            <person name="Goo Y.A."/>
            <person name="Leithauser B."/>
            <person name="Keller K."/>
            <person name="Cruz R."/>
            <person name="Danson M.J."/>
            <person name="Hough D.W."/>
            <person name="Maddocks D.G."/>
            <person name="Jablonski P.E."/>
            <person name="Krebs M.P."/>
            <person name="Angevine C.M."/>
            <person name="Dale H."/>
            <person name="Isenbarger T.A."/>
            <person name="Peck R.F."/>
            <person name="Pohlschroder M."/>
            <person name="Spudich J.L."/>
            <person name="Jung K.-H."/>
            <person name="Alam M."/>
            <person name="Freitas T."/>
            <person name="Hou S."/>
            <person name="Daniels C.J."/>
            <person name="Dennis P.P."/>
            <person name="Omer A.D."/>
            <person name="Ebhardt H."/>
            <person name="Lowe T.M."/>
            <person name="Liang P."/>
            <person name="Riley M."/>
            <person name="Hood L."/>
            <person name="DasSarma S."/>
        </authorList>
    </citation>
    <scope>NUCLEOTIDE SEQUENCE [LARGE SCALE GENOMIC DNA]</scope>
    <source>
        <strain>ATCC 700922 / JCM 11081 / NRC-1</strain>
    </source>
</reference>
<comment type="function">
    <text evidence="1">General factor that plays a role in the activation of archaeal genes transcribed by RNA polymerase. Binds specifically to the TATA box promoter element which lies close to the position of transcription initiation (By similarity).</text>
</comment>
<comment type="similarity">
    <text evidence="2">Belongs to the TBP family.</text>
</comment>
<protein>
    <recommendedName>
        <fullName>TATA-box-binding protein D</fullName>
    </recommendedName>
    <alternativeName>
        <fullName>Box A-binding protein D</fullName>
        <shortName>BAP D</shortName>
    </alternativeName>
    <alternativeName>
        <fullName>TATA sequence-binding protein D</fullName>
        <shortName>TBP D</shortName>
    </alternativeName>
    <alternativeName>
        <fullName>TATA-box factor D</fullName>
    </alternativeName>
</protein>
<geneLocation type="plasmid">
    <name>pNRC100</name>
</geneLocation>
<sequence>MSTLTDTIQIENVVASTDLSQELALEQLATDLPGAEYNPGDFPGVIYRLDDPKSATLIFDSGKAVCTGAQSVDDVHDAISIVVEDLRDLGIDIPPSPPVHVQNIVCSGSLDQDLNLNAIAIGLGLEDVEYEPEQFPGLVYRLNDPDVVVLLFGSGKLVITGGSNPDDAHHALEIIHERLTDLGLLE</sequence>
<evidence type="ECO:0000250" key="1"/>
<evidence type="ECO:0000305" key="2"/>
<gene>
    <name type="primary">tbpD</name>
    <name type="ordered locus">VNG_5163G</name>
</gene>
<name>TBPD_HALSA</name>
<proteinExistence type="inferred from homology"/>
<accession>O52018</accession>
<dbReference type="EMBL" id="AF016485">
    <property type="protein sequence ID" value="AAC82898.1"/>
    <property type="molecule type" value="Genomic_DNA"/>
</dbReference>
<dbReference type="PIR" id="T08331">
    <property type="entry name" value="T08331"/>
</dbReference>
<dbReference type="RefSeq" id="WP_010890467.1">
    <property type="nucleotide sequence ID" value="NZ_BK010830.1"/>
</dbReference>
<dbReference type="SMR" id="O52018"/>
<dbReference type="FunCoup" id="O52018">
    <property type="interactions" value="128"/>
</dbReference>
<dbReference type="KEGG" id="hal:tbpD"/>
<dbReference type="HOGENOM" id="CLU_060161_4_3_2"/>
<dbReference type="InParanoid" id="O52018"/>
<dbReference type="OrthoDB" id="350539at2157"/>
<dbReference type="PhylomeDB" id="O52018"/>
<dbReference type="Proteomes" id="UP000000554">
    <property type="component" value="Plasmid pNRC100"/>
</dbReference>
<dbReference type="GO" id="GO:0003677">
    <property type="term" value="F:DNA binding"/>
    <property type="evidence" value="ECO:0007669"/>
    <property type="project" value="UniProtKB-KW"/>
</dbReference>
<dbReference type="GO" id="GO:0003700">
    <property type="term" value="F:DNA-binding transcription factor activity"/>
    <property type="evidence" value="ECO:0007669"/>
    <property type="project" value="UniProtKB-UniRule"/>
</dbReference>
<dbReference type="GO" id="GO:0140223">
    <property type="term" value="F:general transcription initiation factor activity"/>
    <property type="evidence" value="ECO:0000318"/>
    <property type="project" value="GO_Central"/>
</dbReference>
<dbReference type="GO" id="GO:0006352">
    <property type="term" value="P:DNA-templated transcription initiation"/>
    <property type="evidence" value="ECO:0000318"/>
    <property type="project" value="GO_Central"/>
</dbReference>
<dbReference type="CDD" id="cd04518">
    <property type="entry name" value="TBP_archaea"/>
    <property type="match status" value="1"/>
</dbReference>
<dbReference type="FunFam" id="3.30.310.10:FF:000007">
    <property type="entry name" value="TATA-box-binding protein"/>
    <property type="match status" value="1"/>
</dbReference>
<dbReference type="FunFam" id="3.30.310.10:FF:000010">
    <property type="entry name" value="TATA-box-binding protein"/>
    <property type="match status" value="1"/>
</dbReference>
<dbReference type="Gene3D" id="3.30.310.10">
    <property type="entry name" value="TATA-Binding Protein"/>
    <property type="match status" value="2"/>
</dbReference>
<dbReference type="HAMAP" id="MF_00408">
    <property type="entry name" value="TATA_bind_prot_arch"/>
    <property type="match status" value="1"/>
</dbReference>
<dbReference type="InterPro" id="IPR000814">
    <property type="entry name" value="TBP"/>
</dbReference>
<dbReference type="InterPro" id="IPR033711">
    <property type="entry name" value="TBP_archaea"/>
</dbReference>
<dbReference type="InterPro" id="IPR012295">
    <property type="entry name" value="TBP_dom_sf"/>
</dbReference>
<dbReference type="NCBIfam" id="NF001593">
    <property type="entry name" value="PRK00394.1-2"/>
    <property type="match status" value="1"/>
</dbReference>
<dbReference type="NCBIfam" id="NF001595">
    <property type="entry name" value="PRK00394.1-5"/>
    <property type="match status" value="1"/>
</dbReference>
<dbReference type="PANTHER" id="PTHR10126">
    <property type="entry name" value="TATA-BOX BINDING PROTEIN"/>
    <property type="match status" value="1"/>
</dbReference>
<dbReference type="Pfam" id="PF00352">
    <property type="entry name" value="TBP"/>
    <property type="match status" value="2"/>
</dbReference>
<dbReference type="PRINTS" id="PR00686">
    <property type="entry name" value="TIFACTORIID"/>
</dbReference>
<dbReference type="SUPFAM" id="SSF55945">
    <property type="entry name" value="TATA-box binding protein-like"/>
    <property type="match status" value="2"/>
</dbReference>
<feature type="chain" id="PRO_0000154002" description="TATA-box-binding protein D">
    <location>
        <begin position="1"/>
        <end position="186"/>
    </location>
</feature>
<feature type="repeat" description="1">
    <location>
        <begin position="10"/>
        <end position="86"/>
    </location>
</feature>
<feature type="repeat" description="2">
    <location>
        <begin position="101"/>
        <end position="179"/>
    </location>
</feature>
<organism>
    <name type="scientific">Halobacterium salinarum (strain ATCC 700922 / JCM 11081 / NRC-1)</name>
    <name type="common">Halobacterium halobium</name>
    <dbReference type="NCBI Taxonomy" id="64091"/>
    <lineage>
        <taxon>Archaea</taxon>
        <taxon>Methanobacteriati</taxon>
        <taxon>Methanobacteriota</taxon>
        <taxon>Stenosarchaea group</taxon>
        <taxon>Halobacteria</taxon>
        <taxon>Halobacteriales</taxon>
        <taxon>Halobacteriaceae</taxon>
        <taxon>Halobacterium</taxon>
        <taxon>Halobacterium salinarum NRC-34001</taxon>
    </lineage>
</organism>
<keyword id="KW-0238">DNA-binding</keyword>
<keyword id="KW-0614">Plasmid</keyword>
<keyword id="KW-1185">Reference proteome</keyword>
<keyword id="KW-0677">Repeat</keyword>
<keyword id="KW-0804">Transcription</keyword>
<keyword id="KW-0805">Transcription regulation</keyword>